<protein>
    <recommendedName>
        <fullName>Thiol:disulfide interchange protein DsbE</fullName>
    </recommendedName>
    <alternativeName>
        <fullName>Cytochrome c biogenesis protein CcmG</fullName>
    </alternativeName>
</protein>
<name>DSBE_YERPE</name>
<proteinExistence type="inferred from homology"/>
<gene>
    <name type="primary">dsbE</name>
    <name type="synonym">ccmG</name>
    <name type="ordered locus">YPO2740</name>
    <name type="ordered locus">y1573</name>
    <name type="ordered locus">YP_2424</name>
</gene>
<comment type="function">
    <text evidence="1">Involved in disulfide bond formation. Catalyzes a late, reductive step in the assembly of periplasmic c-type cytochromes, probably the reduction of disulfide bonds of the apocytochrome c to allow covalent linkage with the heme. Possible subunit of a heme lyase (By similarity).</text>
</comment>
<comment type="subcellular location">
    <subcellularLocation>
        <location evidence="1">Cell inner membrane</location>
        <topology evidence="1">Single-pass membrane protein</topology>
        <orientation evidence="1">Periplasmic side</orientation>
    </subcellularLocation>
</comment>
<comment type="similarity">
    <text evidence="4">Belongs to the thioredoxin family. DsbE subfamily.</text>
</comment>
<evidence type="ECO:0000250" key="1"/>
<evidence type="ECO:0000255" key="2"/>
<evidence type="ECO:0000255" key="3">
    <source>
        <dbReference type="PROSITE-ProRule" id="PRU00691"/>
    </source>
</evidence>
<evidence type="ECO:0000305" key="4"/>
<organism>
    <name type="scientific">Yersinia pestis</name>
    <dbReference type="NCBI Taxonomy" id="632"/>
    <lineage>
        <taxon>Bacteria</taxon>
        <taxon>Pseudomonadati</taxon>
        <taxon>Pseudomonadota</taxon>
        <taxon>Gammaproteobacteria</taxon>
        <taxon>Enterobacterales</taxon>
        <taxon>Yersiniaceae</taxon>
        <taxon>Yersinia</taxon>
    </lineage>
</organism>
<sequence length="188" mass="21072">MKPQSSFNKLMFIPLVLFLLLVVAFLIQLTRNANGEDPTMLESALIGKPVPAFKLESLEQPGKTFDQAVLRDGKPILLNVWATWCPTCRAEHEYLNKLAAQGIRVVGLNYKDDRSKAVQWLNSLGNPYFLSLYDGDGMLGLDLGVYGAPETFLIDGQGVIRYRHAGDLNDRVWQQEILPLYKKYQGGA</sequence>
<dbReference type="EMBL" id="AL590842">
    <property type="protein sequence ID" value="CAL21359.1"/>
    <property type="molecule type" value="Genomic_DNA"/>
</dbReference>
<dbReference type="EMBL" id="AE009952">
    <property type="protein sequence ID" value="AAM85142.1"/>
    <property type="molecule type" value="Genomic_DNA"/>
</dbReference>
<dbReference type="EMBL" id="AE017042">
    <property type="protein sequence ID" value="AAS62629.1"/>
    <property type="molecule type" value="Genomic_DNA"/>
</dbReference>
<dbReference type="PIR" id="AD0334">
    <property type="entry name" value="AD0334"/>
</dbReference>
<dbReference type="RefSeq" id="WP_002209699.1">
    <property type="nucleotide sequence ID" value="NZ_WUCM01000012.1"/>
</dbReference>
<dbReference type="RefSeq" id="YP_002347687.1">
    <property type="nucleotide sequence ID" value="NC_003143.1"/>
</dbReference>
<dbReference type="SMR" id="Q8ZD52"/>
<dbReference type="STRING" id="214092.YPO2740"/>
<dbReference type="PaxDb" id="214092-YPO2740"/>
<dbReference type="DNASU" id="1146520"/>
<dbReference type="EnsemblBacteria" id="AAS62629">
    <property type="protein sequence ID" value="AAS62629"/>
    <property type="gene ID" value="YP_2424"/>
</dbReference>
<dbReference type="KEGG" id="ype:YPO2740"/>
<dbReference type="KEGG" id="ypk:y1573"/>
<dbReference type="KEGG" id="ypm:YP_2424"/>
<dbReference type="PATRIC" id="fig|214092.21.peg.3183"/>
<dbReference type="eggNOG" id="COG0526">
    <property type="taxonomic scope" value="Bacteria"/>
</dbReference>
<dbReference type="HOGENOM" id="CLU_042529_19_1_6"/>
<dbReference type="OMA" id="KWLAEFH"/>
<dbReference type="OrthoDB" id="9799347at2"/>
<dbReference type="Proteomes" id="UP000000815">
    <property type="component" value="Chromosome"/>
</dbReference>
<dbReference type="Proteomes" id="UP000001019">
    <property type="component" value="Chromosome"/>
</dbReference>
<dbReference type="Proteomes" id="UP000002490">
    <property type="component" value="Chromosome"/>
</dbReference>
<dbReference type="GO" id="GO:0030288">
    <property type="term" value="C:outer membrane-bounded periplasmic space"/>
    <property type="evidence" value="ECO:0007669"/>
    <property type="project" value="InterPro"/>
</dbReference>
<dbReference type="GO" id="GO:0005886">
    <property type="term" value="C:plasma membrane"/>
    <property type="evidence" value="ECO:0007669"/>
    <property type="project" value="UniProtKB-SubCell"/>
</dbReference>
<dbReference type="GO" id="GO:0015036">
    <property type="term" value="F:disulfide oxidoreductase activity"/>
    <property type="evidence" value="ECO:0007669"/>
    <property type="project" value="InterPro"/>
</dbReference>
<dbReference type="GO" id="GO:0017004">
    <property type="term" value="P:cytochrome complex assembly"/>
    <property type="evidence" value="ECO:0007669"/>
    <property type="project" value="UniProtKB-KW"/>
</dbReference>
<dbReference type="CDD" id="cd03010">
    <property type="entry name" value="TlpA_like_DsbE"/>
    <property type="match status" value="1"/>
</dbReference>
<dbReference type="Gene3D" id="3.40.30.10">
    <property type="entry name" value="Glutaredoxin"/>
    <property type="match status" value="1"/>
</dbReference>
<dbReference type="InterPro" id="IPR004799">
    <property type="entry name" value="Periplasmic_diS_OxRdtase_DsbE"/>
</dbReference>
<dbReference type="InterPro" id="IPR013740">
    <property type="entry name" value="Redoxin"/>
</dbReference>
<dbReference type="InterPro" id="IPR036249">
    <property type="entry name" value="Thioredoxin-like_sf"/>
</dbReference>
<dbReference type="InterPro" id="IPR017937">
    <property type="entry name" value="Thioredoxin_CS"/>
</dbReference>
<dbReference type="InterPro" id="IPR013766">
    <property type="entry name" value="Thioredoxin_domain"/>
</dbReference>
<dbReference type="InterPro" id="IPR050553">
    <property type="entry name" value="Thioredoxin_ResA/DsbE_sf"/>
</dbReference>
<dbReference type="NCBIfam" id="TIGR00385">
    <property type="entry name" value="dsbE"/>
    <property type="match status" value="1"/>
</dbReference>
<dbReference type="PANTHER" id="PTHR42852">
    <property type="entry name" value="THIOL:DISULFIDE INTERCHANGE PROTEIN DSBE"/>
    <property type="match status" value="1"/>
</dbReference>
<dbReference type="PANTHER" id="PTHR42852:SF6">
    <property type="entry name" value="THIOL:DISULFIDE INTERCHANGE PROTEIN DSBE"/>
    <property type="match status" value="1"/>
</dbReference>
<dbReference type="Pfam" id="PF08534">
    <property type="entry name" value="Redoxin"/>
    <property type="match status" value="1"/>
</dbReference>
<dbReference type="SUPFAM" id="SSF52833">
    <property type="entry name" value="Thioredoxin-like"/>
    <property type="match status" value="1"/>
</dbReference>
<dbReference type="PROSITE" id="PS00194">
    <property type="entry name" value="THIOREDOXIN_1"/>
    <property type="match status" value="1"/>
</dbReference>
<dbReference type="PROSITE" id="PS51352">
    <property type="entry name" value="THIOREDOXIN_2"/>
    <property type="match status" value="1"/>
</dbReference>
<accession>Q8ZD52</accession>
<accession>Q0WDF1</accession>
<reference key="1">
    <citation type="journal article" date="2001" name="Nature">
        <title>Genome sequence of Yersinia pestis, the causative agent of plague.</title>
        <authorList>
            <person name="Parkhill J."/>
            <person name="Wren B.W."/>
            <person name="Thomson N.R."/>
            <person name="Titball R.W."/>
            <person name="Holden M.T.G."/>
            <person name="Prentice M.B."/>
            <person name="Sebaihia M."/>
            <person name="James K.D."/>
            <person name="Churcher C.M."/>
            <person name="Mungall K.L."/>
            <person name="Baker S."/>
            <person name="Basham D."/>
            <person name="Bentley S.D."/>
            <person name="Brooks K."/>
            <person name="Cerdeno-Tarraga A.-M."/>
            <person name="Chillingworth T."/>
            <person name="Cronin A."/>
            <person name="Davies R.M."/>
            <person name="Davis P."/>
            <person name="Dougan G."/>
            <person name="Feltwell T."/>
            <person name="Hamlin N."/>
            <person name="Holroyd S."/>
            <person name="Jagels K."/>
            <person name="Karlyshev A.V."/>
            <person name="Leather S."/>
            <person name="Moule S."/>
            <person name="Oyston P.C.F."/>
            <person name="Quail M.A."/>
            <person name="Rutherford K.M."/>
            <person name="Simmonds M."/>
            <person name="Skelton J."/>
            <person name="Stevens K."/>
            <person name="Whitehead S."/>
            <person name="Barrell B.G."/>
        </authorList>
    </citation>
    <scope>NUCLEOTIDE SEQUENCE [LARGE SCALE GENOMIC DNA]</scope>
    <source>
        <strain>CO-92 / Biovar Orientalis</strain>
    </source>
</reference>
<reference key="2">
    <citation type="journal article" date="2002" name="J. Bacteriol.">
        <title>Genome sequence of Yersinia pestis KIM.</title>
        <authorList>
            <person name="Deng W."/>
            <person name="Burland V."/>
            <person name="Plunkett G. III"/>
            <person name="Boutin A."/>
            <person name="Mayhew G.F."/>
            <person name="Liss P."/>
            <person name="Perna N.T."/>
            <person name="Rose D.J."/>
            <person name="Mau B."/>
            <person name="Zhou S."/>
            <person name="Schwartz D.C."/>
            <person name="Fetherston J.D."/>
            <person name="Lindler L.E."/>
            <person name="Brubaker R.R."/>
            <person name="Plano G.V."/>
            <person name="Straley S.C."/>
            <person name="McDonough K.A."/>
            <person name="Nilles M.L."/>
            <person name="Matson J.S."/>
            <person name="Blattner F.R."/>
            <person name="Perry R.D."/>
        </authorList>
    </citation>
    <scope>NUCLEOTIDE SEQUENCE [LARGE SCALE GENOMIC DNA]</scope>
    <source>
        <strain>KIM10+ / Biovar Mediaevalis</strain>
    </source>
</reference>
<reference key="3">
    <citation type="journal article" date="2004" name="DNA Res.">
        <title>Complete genome sequence of Yersinia pestis strain 91001, an isolate avirulent to humans.</title>
        <authorList>
            <person name="Song Y."/>
            <person name="Tong Z."/>
            <person name="Wang J."/>
            <person name="Wang L."/>
            <person name="Guo Z."/>
            <person name="Han Y."/>
            <person name="Zhang J."/>
            <person name="Pei D."/>
            <person name="Zhou D."/>
            <person name="Qin H."/>
            <person name="Pang X."/>
            <person name="Han Y."/>
            <person name="Zhai J."/>
            <person name="Li M."/>
            <person name="Cui B."/>
            <person name="Qi Z."/>
            <person name="Jin L."/>
            <person name="Dai R."/>
            <person name="Chen F."/>
            <person name="Li S."/>
            <person name="Ye C."/>
            <person name="Du Z."/>
            <person name="Lin W."/>
            <person name="Wang J."/>
            <person name="Yu J."/>
            <person name="Yang H."/>
            <person name="Wang J."/>
            <person name="Huang P."/>
            <person name="Yang R."/>
        </authorList>
    </citation>
    <scope>NUCLEOTIDE SEQUENCE [LARGE SCALE GENOMIC DNA]</scope>
    <source>
        <strain>91001 / Biovar Mediaevalis</strain>
    </source>
</reference>
<feature type="chain" id="PRO_0000201306" description="Thiol:disulfide interchange protein DsbE">
    <location>
        <begin position="1"/>
        <end position="188"/>
    </location>
</feature>
<feature type="topological domain" description="Cytoplasmic" evidence="2">
    <location>
        <begin position="1"/>
        <end position="9"/>
    </location>
</feature>
<feature type="transmembrane region" description="Helical" evidence="2">
    <location>
        <begin position="10"/>
        <end position="30"/>
    </location>
</feature>
<feature type="topological domain" description="Periplasmic" evidence="2">
    <location>
        <begin position="31"/>
        <end position="188"/>
    </location>
</feature>
<feature type="domain" description="Thioredoxin" evidence="3">
    <location>
        <begin position="44"/>
        <end position="186"/>
    </location>
</feature>
<feature type="disulfide bond" description="Redox-active" evidence="3">
    <location>
        <begin position="85"/>
        <end position="88"/>
    </location>
</feature>
<feature type="sequence conflict" description="In Ref. 3; AAS62629." evidence="4" ref="3">
    <original>V</original>
    <variation>G</variation>
    <location>
        <position position="145"/>
    </location>
</feature>
<keyword id="KW-0997">Cell inner membrane</keyword>
<keyword id="KW-1003">Cell membrane</keyword>
<keyword id="KW-0201">Cytochrome c-type biogenesis</keyword>
<keyword id="KW-1015">Disulfide bond</keyword>
<keyword id="KW-0472">Membrane</keyword>
<keyword id="KW-0676">Redox-active center</keyword>
<keyword id="KW-1185">Reference proteome</keyword>
<keyword id="KW-0812">Transmembrane</keyword>
<keyword id="KW-1133">Transmembrane helix</keyword>